<protein>
    <recommendedName>
        <fullName evidence="1">DNA-directed RNA polymerase subunit omega</fullName>
        <shortName evidence="1">RNAP omega subunit</shortName>
        <ecNumber evidence="1">2.7.7.6</ecNumber>
    </recommendedName>
    <alternativeName>
        <fullName evidence="1">RNA polymerase omega subunit</fullName>
    </alternativeName>
    <alternativeName>
        <fullName evidence="1">Transcriptase subunit omega</fullName>
    </alternativeName>
</protein>
<gene>
    <name evidence="1" type="primary">rpoZ</name>
    <name type="ordered locus">Npun_R6071</name>
</gene>
<keyword id="KW-0240">DNA-directed RNA polymerase</keyword>
<keyword id="KW-0548">Nucleotidyltransferase</keyword>
<keyword id="KW-1185">Reference proteome</keyword>
<keyword id="KW-0804">Transcription</keyword>
<keyword id="KW-0808">Transferase</keyword>
<accession>B2IUW7</accession>
<evidence type="ECO:0000255" key="1">
    <source>
        <dbReference type="HAMAP-Rule" id="MF_00366"/>
    </source>
</evidence>
<proteinExistence type="inferred from homology"/>
<name>RPOZ_NOSP7</name>
<comment type="function">
    <text evidence="1">Promotes RNA polymerase assembly. Latches the N- and C-terminal regions of the beta' subunit thereby facilitating its interaction with the beta and alpha subunits.</text>
</comment>
<comment type="catalytic activity">
    <reaction evidence="1">
        <text>RNA(n) + a ribonucleoside 5'-triphosphate = RNA(n+1) + diphosphate</text>
        <dbReference type="Rhea" id="RHEA:21248"/>
        <dbReference type="Rhea" id="RHEA-COMP:14527"/>
        <dbReference type="Rhea" id="RHEA-COMP:17342"/>
        <dbReference type="ChEBI" id="CHEBI:33019"/>
        <dbReference type="ChEBI" id="CHEBI:61557"/>
        <dbReference type="ChEBI" id="CHEBI:140395"/>
        <dbReference type="EC" id="2.7.7.6"/>
    </reaction>
</comment>
<comment type="subunit">
    <text evidence="1">In cyanobacteria the RNAP catalytic core is composed of 2 alpha, 1 beta, 1 beta', 1 gamma and 1 omega subunit. When a sigma factor is associated with the core the holoenzyme is formed, which can initiate transcription.</text>
</comment>
<comment type="similarity">
    <text evidence="1">Belongs to the RNA polymerase subunit omega family.</text>
</comment>
<feature type="chain" id="PRO_1000121250" description="DNA-directed RNA polymerase subunit omega">
    <location>
        <begin position="1"/>
        <end position="78"/>
    </location>
</feature>
<sequence>MLKRSKFETTQSQIMHRAEELISAASNRYRITVQVANRAKRRRYEDFENNEDAMMKPVLRAIIEMSDELTQPEIIGEL</sequence>
<reference key="1">
    <citation type="journal article" date="2013" name="Plant Physiol.">
        <title>A Nostoc punctiforme Sugar Transporter Necessary to Establish a Cyanobacterium-Plant Symbiosis.</title>
        <authorList>
            <person name="Ekman M."/>
            <person name="Picossi S."/>
            <person name="Campbell E.L."/>
            <person name="Meeks J.C."/>
            <person name="Flores E."/>
        </authorList>
    </citation>
    <scope>NUCLEOTIDE SEQUENCE [LARGE SCALE GENOMIC DNA]</scope>
    <source>
        <strain>ATCC 29133 / PCC 73102</strain>
    </source>
</reference>
<organism>
    <name type="scientific">Nostoc punctiforme (strain ATCC 29133 / PCC 73102)</name>
    <dbReference type="NCBI Taxonomy" id="63737"/>
    <lineage>
        <taxon>Bacteria</taxon>
        <taxon>Bacillati</taxon>
        <taxon>Cyanobacteriota</taxon>
        <taxon>Cyanophyceae</taxon>
        <taxon>Nostocales</taxon>
        <taxon>Nostocaceae</taxon>
        <taxon>Nostoc</taxon>
    </lineage>
</organism>
<dbReference type="EC" id="2.7.7.6" evidence="1"/>
<dbReference type="EMBL" id="CP001037">
    <property type="protein sequence ID" value="ACC84360.1"/>
    <property type="molecule type" value="Genomic_DNA"/>
</dbReference>
<dbReference type="RefSeq" id="WP_012412301.1">
    <property type="nucleotide sequence ID" value="NC_010628.1"/>
</dbReference>
<dbReference type="SMR" id="B2IUW7"/>
<dbReference type="STRING" id="63737.Npun_R6071"/>
<dbReference type="EnsemblBacteria" id="ACC84360">
    <property type="protein sequence ID" value="ACC84360"/>
    <property type="gene ID" value="Npun_R6071"/>
</dbReference>
<dbReference type="KEGG" id="npu:Npun_R6071"/>
<dbReference type="eggNOG" id="ENOG5032RMS">
    <property type="taxonomic scope" value="Bacteria"/>
</dbReference>
<dbReference type="HOGENOM" id="CLU_175526_0_0_3"/>
<dbReference type="OrthoDB" id="463386at2"/>
<dbReference type="PhylomeDB" id="B2IUW7"/>
<dbReference type="Proteomes" id="UP000001191">
    <property type="component" value="Chromosome"/>
</dbReference>
<dbReference type="GO" id="GO:0000428">
    <property type="term" value="C:DNA-directed RNA polymerase complex"/>
    <property type="evidence" value="ECO:0007669"/>
    <property type="project" value="UniProtKB-KW"/>
</dbReference>
<dbReference type="GO" id="GO:0003677">
    <property type="term" value="F:DNA binding"/>
    <property type="evidence" value="ECO:0007669"/>
    <property type="project" value="UniProtKB-UniRule"/>
</dbReference>
<dbReference type="GO" id="GO:0003899">
    <property type="term" value="F:DNA-directed RNA polymerase activity"/>
    <property type="evidence" value="ECO:0007669"/>
    <property type="project" value="UniProtKB-UniRule"/>
</dbReference>
<dbReference type="GO" id="GO:0006351">
    <property type="term" value="P:DNA-templated transcription"/>
    <property type="evidence" value="ECO:0007669"/>
    <property type="project" value="UniProtKB-UniRule"/>
</dbReference>
<dbReference type="HAMAP" id="MF_00366">
    <property type="entry name" value="RNApol_bact_RpoZ"/>
    <property type="match status" value="1"/>
</dbReference>
<dbReference type="InterPro" id="IPR003716">
    <property type="entry name" value="DNA-dir_RNA_pol_omega"/>
</dbReference>
<dbReference type="InterPro" id="IPR006110">
    <property type="entry name" value="Pol_omega/Rpo6/RPB6"/>
</dbReference>
<dbReference type="InterPro" id="IPR036161">
    <property type="entry name" value="RPB6/omega-like_sf"/>
</dbReference>
<dbReference type="NCBIfam" id="NF001574">
    <property type="entry name" value="PRK00392.2-5"/>
    <property type="match status" value="1"/>
</dbReference>
<dbReference type="Pfam" id="PF01192">
    <property type="entry name" value="RNA_pol_Rpb6"/>
    <property type="match status" value="1"/>
</dbReference>
<dbReference type="SUPFAM" id="SSF63562">
    <property type="entry name" value="RPB6/omega subunit-like"/>
    <property type="match status" value="1"/>
</dbReference>